<sequence>MANHPLTLEKDGFIVTTLDAAMAAAQKNSLWYMTFGLARCAVEMMHAAGARYDMDRFGMIPRASPRQCDLMIVAGTLTNKMAPAMRRVYDQMAEPRYVVSMGSCANGGGYYHYGYSVVRGCDRIVPVDVYVPGCPPTAEALVYDLMQLQRKVAERSTHSRPKLFARP</sequence>
<protein>
    <recommendedName>
        <fullName>Putative NADH-quinone oxidoreductase subunit B 2</fullName>
        <ecNumber evidence="2">7.1.1.-</ecNumber>
    </recommendedName>
    <alternativeName>
        <fullName evidence="2">NADH dehydrogenase I subunit B 2</fullName>
    </alternativeName>
    <alternativeName>
        <fullName evidence="2">NDH-1 subunit B 2</fullName>
    </alternativeName>
</protein>
<evidence type="ECO:0000250" key="1"/>
<evidence type="ECO:0000255" key="2">
    <source>
        <dbReference type="HAMAP-Rule" id="MF_01356"/>
    </source>
</evidence>
<evidence type="ECO:0000305" key="3"/>
<gene>
    <name evidence="2" type="primary">nuoB2</name>
    <name type="ordered locus">BURPS1710b_3588</name>
</gene>
<dbReference type="EC" id="7.1.1.-" evidence="2"/>
<dbReference type="EMBL" id="CP000124">
    <property type="protein sequence ID" value="ABA50487.1"/>
    <property type="status" value="ALT_INIT"/>
    <property type="molecule type" value="Genomic_DNA"/>
</dbReference>
<dbReference type="RefSeq" id="WP_004527800.1">
    <property type="nucleotide sequence ID" value="NC_007434.1"/>
</dbReference>
<dbReference type="SMR" id="Q3JNA0"/>
<dbReference type="EnsemblBacteria" id="ABA50487">
    <property type="protein sequence ID" value="ABA50487"/>
    <property type="gene ID" value="BURPS1710b_3588"/>
</dbReference>
<dbReference type="KEGG" id="bpm:BURPS1710b_3588"/>
<dbReference type="HOGENOM" id="CLU_055737_1_2_4"/>
<dbReference type="Proteomes" id="UP000002700">
    <property type="component" value="Chromosome I"/>
</dbReference>
<dbReference type="GO" id="GO:0005886">
    <property type="term" value="C:plasma membrane"/>
    <property type="evidence" value="ECO:0007669"/>
    <property type="project" value="UniProtKB-SubCell"/>
</dbReference>
<dbReference type="GO" id="GO:0045271">
    <property type="term" value="C:respiratory chain complex I"/>
    <property type="evidence" value="ECO:0007669"/>
    <property type="project" value="TreeGrafter"/>
</dbReference>
<dbReference type="GO" id="GO:0051539">
    <property type="term" value="F:4 iron, 4 sulfur cluster binding"/>
    <property type="evidence" value="ECO:0007669"/>
    <property type="project" value="InterPro"/>
</dbReference>
<dbReference type="GO" id="GO:0005506">
    <property type="term" value="F:iron ion binding"/>
    <property type="evidence" value="ECO:0007669"/>
    <property type="project" value="UniProtKB-UniRule"/>
</dbReference>
<dbReference type="GO" id="GO:0008137">
    <property type="term" value="F:NADH dehydrogenase (ubiquinone) activity"/>
    <property type="evidence" value="ECO:0007669"/>
    <property type="project" value="InterPro"/>
</dbReference>
<dbReference type="GO" id="GO:0050136">
    <property type="term" value="F:NADH:ubiquinone reductase (non-electrogenic) activity"/>
    <property type="evidence" value="ECO:0007669"/>
    <property type="project" value="UniProtKB-UniRule"/>
</dbReference>
<dbReference type="GO" id="GO:0048038">
    <property type="term" value="F:quinone binding"/>
    <property type="evidence" value="ECO:0007669"/>
    <property type="project" value="UniProtKB-KW"/>
</dbReference>
<dbReference type="GO" id="GO:0009060">
    <property type="term" value="P:aerobic respiration"/>
    <property type="evidence" value="ECO:0007669"/>
    <property type="project" value="TreeGrafter"/>
</dbReference>
<dbReference type="GO" id="GO:0015990">
    <property type="term" value="P:electron transport coupled proton transport"/>
    <property type="evidence" value="ECO:0007669"/>
    <property type="project" value="TreeGrafter"/>
</dbReference>
<dbReference type="FunFam" id="3.40.50.12280:FF:000001">
    <property type="entry name" value="NADH-quinone oxidoreductase subunit B 2"/>
    <property type="match status" value="1"/>
</dbReference>
<dbReference type="Gene3D" id="3.40.50.12280">
    <property type="match status" value="1"/>
</dbReference>
<dbReference type="HAMAP" id="MF_01356">
    <property type="entry name" value="NDH1_NuoB"/>
    <property type="match status" value="1"/>
</dbReference>
<dbReference type="InterPro" id="IPR006137">
    <property type="entry name" value="NADH_UbQ_OxRdtase-like_20kDa"/>
</dbReference>
<dbReference type="InterPro" id="IPR006138">
    <property type="entry name" value="NADH_UQ_OxRdtase_20Kd_su"/>
</dbReference>
<dbReference type="NCBIfam" id="TIGR01957">
    <property type="entry name" value="nuoB_fam"/>
    <property type="match status" value="1"/>
</dbReference>
<dbReference type="NCBIfam" id="NF005012">
    <property type="entry name" value="PRK06411.1"/>
    <property type="match status" value="1"/>
</dbReference>
<dbReference type="PANTHER" id="PTHR11995">
    <property type="entry name" value="NADH DEHYDROGENASE"/>
    <property type="match status" value="1"/>
</dbReference>
<dbReference type="PANTHER" id="PTHR11995:SF14">
    <property type="entry name" value="NADH DEHYDROGENASE [UBIQUINONE] IRON-SULFUR PROTEIN 7, MITOCHONDRIAL"/>
    <property type="match status" value="1"/>
</dbReference>
<dbReference type="Pfam" id="PF01058">
    <property type="entry name" value="Oxidored_q6"/>
    <property type="match status" value="1"/>
</dbReference>
<dbReference type="SUPFAM" id="SSF56770">
    <property type="entry name" value="HydA/Nqo6-like"/>
    <property type="match status" value="1"/>
</dbReference>
<dbReference type="PROSITE" id="PS01150">
    <property type="entry name" value="COMPLEX1_20K"/>
    <property type="match status" value="1"/>
</dbReference>
<organism>
    <name type="scientific">Burkholderia pseudomallei (strain 1710b)</name>
    <dbReference type="NCBI Taxonomy" id="320372"/>
    <lineage>
        <taxon>Bacteria</taxon>
        <taxon>Pseudomonadati</taxon>
        <taxon>Pseudomonadota</taxon>
        <taxon>Betaproteobacteria</taxon>
        <taxon>Burkholderiales</taxon>
        <taxon>Burkholderiaceae</taxon>
        <taxon>Burkholderia</taxon>
        <taxon>pseudomallei group</taxon>
    </lineage>
</organism>
<feature type="chain" id="PRO_0000358385" description="Putative NADH-quinone oxidoreductase subunit B 2">
    <location>
        <begin position="1"/>
        <end position="167"/>
    </location>
</feature>
<name>NUOB2_BURP1</name>
<reference key="1">
    <citation type="journal article" date="2010" name="Genome Biol. Evol.">
        <title>Continuing evolution of Burkholderia mallei through genome reduction and large-scale rearrangements.</title>
        <authorList>
            <person name="Losada L."/>
            <person name="Ronning C.M."/>
            <person name="DeShazer D."/>
            <person name="Woods D."/>
            <person name="Fedorova N."/>
            <person name="Kim H.S."/>
            <person name="Shabalina S.A."/>
            <person name="Pearson T.R."/>
            <person name="Brinkac L."/>
            <person name="Tan P."/>
            <person name="Nandi T."/>
            <person name="Crabtree J."/>
            <person name="Badger J."/>
            <person name="Beckstrom-Sternberg S."/>
            <person name="Saqib M."/>
            <person name="Schutzer S.E."/>
            <person name="Keim P."/>
            <person name="Nierman W.C."/>
        </authorList>
    </citation>
    <scope>NUCLEOTIDE SEQUENCE [LARGE SCALE GENOMIC DNA]</scope>
    <source>
        <strain>1710b</strain>
    </source>
</reference>
<proteinExistence type="inferred from homology"/>
<comment type="function">
    <text evidence="1">NDH-1 shuttles electrons from NADH, via FMN and iron-sulfur (Fe-S) centers, to quinones in the respiratory chain. Couples the redox reaction to proton translocation (for every two electrons transferred, four hydrogen ions are translocated across the cytoplasmic membrane), and thus conserves the redox energy in a proton gradient (By similarity).</text>
</comment>
<comment type="catalytic activity">
    <reaction evidence="2">
        <text>a quinone + NADH + 5 H(+)(in) = a quinol + NAD(+) + 4 H(+)(out)</text>
        <dbReference type="Rhea" id="RHEA:57888"/>
        <dbReference type="ChEBI" id="CHEBI:15378"/>
        <dbReference type="ChEBI" id="CHEBI:24646"/>
        <dbReference type="ChEBI" id="CHEBI:57540"/>
        <dbReference type="ChEBI" id="CHEBI:57945"/>
        <dbReference type="ChEBI" id="CHEBI:132124"/>
    </reaction>
</comment>
<comment type="subunit">
    <text evidence="2">NDH-1 is composed of 14 different subunits. Subunits NuoB, C, D, E, F, and G constitute the peripheral sector of the complex.</text>
</comment>
<comment type="subcellular location">
    <subcellularLocation>
        <location evidence="2">Cell inner membrane</location>
        <topology evidence="2">Peripheral membrane protein</topology>
        <orientation evidence="2">Cytoplasmic side</orientation>
    </subcellularLocation>
</comment>
<comment type="similarity">
    <text evidence="2">Belongs to the complex I 20 kDa subunit family.</text>
</comment>
<comment type="caution">
    <text evidence="3">This protein lacks the conserved Cys in position 39; it is replaced by Arg. Thus this protein is probably unable to bind the 4Fe-4S cluster and may be non-functional.</text>
</comment>
<comment type="sequence caution" evidence="3">
    <conflict type="erroneous initiation">
        <sequence resource="EMBL-CDS" id="ABA50487"/>
    </conflict>
</comment>
<accession>Q3JNA0</accession>
<keyword id="KW-0997">Cell inner membrane</keyword>
<keyword id="KW-1003">Cell membrane</keyword>
<keyword id="KW-0472">Membrane</keyword>
<keyword id="KW-0520">NAD</keyword>
<keyword id="KW-0874">Quinone</keyword>
<keyword id="KW-1278">Translocase</keyword>
<keyword id="KW-0813">Transport</keyword>
<keyword id="KW-0830">Ubiquinone</keyword>